<evidence type="ECO:0000305" key="1"/>
<dbReference type="EMBL" id="AL590443">
    <property type="protein sequence ID" value="CAD26151.1"/>
    <property type="molecule type" value="Genomic_DNA"/>
</dbReference>
<dbReference type="RefSeq" id="NP_597516.1">
    <property type="nucleotide sequence ID" value="NM_001040880.1"/>
</dbReference>
<dbReference type="GeneID" id="858678"/>
<dbReference type="KEGG" id="ecu:ECU03_0040"/>
<dbReference type="VEuPathDB" id="MicrosporidiaDB:ECU03_0040"/>
<dbReference type="HOGENOM" id="CLU_059413_0_0_1"/>
<dbReference type="InParanoid" id="Q8SW83"/>
<dbReference type="Proteomes" id="UP000000819">
    <property type="component" value="Chromosome III"/>
</dbReference>
<dbReference type="InterPro" id="IPR019081">
    <property type="entry name" value="UPF0328"/>
</dbReference>
<dbReference type="Pfam" id="PF09591">
    <property type="entry name" value="DUF2463"/>
    <property type="match status" value="1"/>
</dbReference>
<reference key="1">
    <citation type="journal article" date="2001" name="Nature">
        <title>Genome sequence and gene compaction of the eukaryote parasite Encephalitozoon cuniculi.</title>
        <authorList>
            <person name="Katinka M.D."/>
            <person name="Duprat S."/>
            <person name="Cornillot E."/>
            <person name="Metenier G."/>
            <person name="Thomarat F."/>
            <person name="Prensier G."/>
            <person name="Barbe V."/>
            <person name="Peyretaillade E."/>
            <person name="Brottier P."/>
            <person name="Wincker P."/>
            <person name="Delbac F."/>
            <person name="El Alaoui H."/>
            <person name="Peyret P."/>
            <person name="Saurin W."/>
            <person name="Gouy M."/>
            <person name="Weissenbach J."/>
            <person name="Vivares C.P."/>
        </authorList>
    </citation>
    <scope>NUCLEOTIDE SEQUENCE [LARGE SCALE GENOMIC DNA]</scope>
    <source>
        <strain>GB-M1</strain>
    </source>
</reference>
<proteinExistence type="inferred from homology"/>
<sequence>MNTTHVPEPHRTEQHTENLQHWRKILGIAPIVSIAFPAIMYFIFTKDSFEDSLFLRFITILLSFSYSAVQYAVLLHTNWKSHNKPEGILHTTLYYTLNLLLLAFSIISILSITTLPINKWKNDGGPILFSIFLPPLFMSPAYLLSTSCRLVPGQIGFTDTGINVLIDILTLLCSVGSLLLILEESEYCYCFAIISSILILIRLLGEKLSPEKQSPPPTAPWRIAVFVLILIFAALIYAFMMWVSIDILSDHFDLLTKARSTSVSKPGQ</sequence>
<keyword id="KW-1185">Reference proteome</keyword>
<protein>
    <recommendedName>
        <fullName>UPF0328 protein ECU03_0040</fullName>
    </recommendedName>
</protein>
<accession>Q8SW83</accession>
<comment type="similarity">
    <text evidence="1">Belongs to the UPF0328 family.</text>
</comment>
<gene>
    <name type="ordered locus">ECU03_0040</name>
</gene>
<name>Y304_ENCCU</name>
<feature type="chain" id="PRO_0000223117" description="UPF0328 protein ECU03_0040">
    <location>
        <begin position="1"/>
        <end position="268"/>
    </location>
</feature>
<organism>
    <name type="scientific">Encephalitozoon cuniculi (strain GB-M1)</name>
    <name type="common">Microsporidian parasite</name>
    <dbReference type="NCBI Taxonomy" id="284813"/>
    <lineage>
        <taxon>Eukaryota</taxon>
        <taxon>Fungi</taxon>
        <taxon>Fungi incertae sedis</taxon>
        <taxon>Microsporidia</taxon>
        <taxon>Unikaryonidae</taxon>
        <taxon>Encephalitozoon</taxon>
    </lineage>
</organism>